<name>SYY_CHLTB</name>
<gene>
    <name evidence="1" type="primary">tyrS</name>
    <name type="ordered locus">CTLon_0313</name>
</gene>
<proteinExistence type="inferred from homology"/>
<reference key="1">
    <citation type="journal article" date="2008" name="Genome Res.">
        <title>Chlamydia trachomatis: genome sequence analysis of lymphogranuloma venereum isolates.</title>
        <authorList>
            <person name="Thomson N.R."/>
            <person name="Holden M.T.G."/>
            <person name="Carder C."/>
            <person name="Lennard N."/>
            <person name="Lockey S.J."/>
            <person name="Marsh P."/>
            <person name="Skipp P."/>
            <person name="O'Connor C.D."/>
            <person name="Goodhead I."/>
            <person name="Norbertzcak H."/>
            <person name="Harris B."/>
            <person name="Ormond D."/>
            <person name="Rance R."/>
            <person name="Quail M.A."/>
            <person name="Parkhill J."/>
            <person name="Stephens R.S."/>
            <person name="Clarke I.N."/>
        </authorList>
    </citation>
    <scope>NUCLEOTIDE SEQUENCE [LARGE SCALE GENOMIC DNA]</scope>
    <source>
        <strain>UCH-1/proctitis</strain>
    </source>
</reference>
<organism>
    <name type="scientific">Chlamydia trachomatis serovar L2b (strain UCH-1/proctitis)</name>
    <dbReference type="NCBI Taxonomy" id="471473"/>
    <lineage>
        <taxon>Bacteria</taxon>
        <taxon>Pseudomonadati</taxon>
        <taxon>Chlamydiota</taxon>
        <taxon>Chlamydiia</taxon>
        <taxon>Chlamydiales</taxon>
        <taxon>Chlamydiaceae</taxon>
        <taxon>Chlamydia/Chlamydophila group</taxon>
        <taxon>Chlamydia</taxon>
    </lineage>
</organism>
<accession>B0BB49</accession>
<protein>
    <recommendedName>
        <fullName evidence="1">Tyrosine--tRNA ligase</fullName>
        <ecNumber evidence="1">6.1.1.1</ecNumber>
    </recommendedName>
    <alternativeName>
        <fullName evidence="1">Tyrosyl-tRNA synthetase</fullName>
        <shortName evidence="1">TyrRS</shortName>
    </alternativeName>
</protein>
<sequence length="412" mass="45435">MQQLIDNLKKRGILDNSSAGLESLTVPVSAYLGFDPTAPSLHIGHWIGICFLRRLAAYGITPVALVGGATGMIGDPSGKSVERSLLDQAQVLDNSKKIAAALASYLPGIRIVNNADWLGSLSMVDFLRDVGKHFRLGSMLAKDVVKQRVYSEEGISYTEFSYLLLQSYDFAHLFKEHNVVLQCGGSDQWGNITSGIDYIRRRGLGQAYGLTYPLLTDSKGKKIGKTESGTIWLDPALTPPYELFQYFLRLPDQEISKVMRTLTLLDNEEIFALDERLTSDPQAVKKYIAEVIVKDVHGSEGLAQAQAATESFFASKGKSITEAELVALVESGVGVKVARADLIGKRWLDIVVELGFCSSRGQARRLIQQRGLYINQEPLADEQSILDGTQLCFDRYVLLSQGKRKKQVIDLN</sequence>
<keyword id="KW-0030">Aminoacyl-tRNA synthetase</keyword>
<keyword id="KW-0067">ATP-binding</keyword>
<keyword id="KW-0963">Cytoplasm</keyword>
<keyword id="KW-0436">Ligase</keyword>
<keyword id="KW-0547">Nucleotide-binding</keyword>
<keyword id="KW-0648">Protein biosynthesis</keyword>
<keyword id="KW-0694">RNA-binding</keyword>
<feature type="chain" id="PRO_1000189270" description="Tyrosine--tRNA ligase">
    <location>
        <begin position="1"/>
        <end position="412"/>
    </location>
</feature>
<feature type="domain" description="S4 RNA-binding" evidence="1">
    <location>
        <begin position="345"/>
        <end position="411"/>
    </location>
</feature>
<feature type="short sequence motif" description="'HIGH' region">
    <location>
        <begin position="36"/>
        <end position="45"/>
    </location>
</feature>
<feature type="short sequence motif" description="'KMSKS' region">
    <location>
        <begin position="222"/>
        <end position="226"/>
    </location>
</feature>
<feature type="binding site" evidence="1">
    <location>
        <position position="31"/>
    </location>
    <ligand>
        <name>L-tyrosine</name>
        <dbReference type="ChEBI" id="CHEBI:58315"/>
    </ligand>
</feature>
<feature type="binding site" evidence="1">
    <location>
        <position position="162"/>
    </location>
    <ligand>
        <name>L-tyrosine</name>
        <dbReference type="ChEBI" id="CHEBI:58315"/>
    </ligand>
</feature>
<feature type="binding site" evidence="1">
    <location>
        <position position="166"/>
    </location>
    <ligand>
        <name>L-tyrosine</name>
        <dbReference type="ChEBI" id="CHEBI:58315"/>
    </ligand>
</feature>
<feature type="binding site" evidence="1">
    <location>
        <position position="225"/>
    </location>
    <ligand>
        <name>ATP</name>
        <dbReference type="ChEBI" id="CHEBI:30616"/>
    </ligand>
</feature>
<comment type="function">
    <text evidence="1">Catalyzes the attachment of tyrosine to tRNA(Tyr) in a two-step reaction: tyrosine is first activated by ATP to form Tyr-AMP and then transferred to the acceptor end of tRNA(Tyr).</text>
</comment>
<comment type="catalytic activity">
    <reaction evidence="1">
        <text>tRNA(Tyr) + L-tyrosine + ATP = L-tyrosyl-tRNA(Tyr) + AMP + diphosphate + H(+)</text>
        <dbReference type="Rhea" id="RHEA:10220"/>
        <dbReference type="Rhea" id="RHEA-COMP:9706"/>
        <dbReference type="Rhea" id="RHEA-COMP:9707"/>
        <dbReference type="ChEBI" id="CHEBI:15378"/>
        <dbReference type="ChEBI" id="CHEBI:30616"/>
        <dbReference type="ChEBI" id="CHEBI:33019"/>
        <dbReference type="ChEBI" id="CHEBI:58315"/>
        <dbReference type="ChEBI" id="CHEBI:78442"/>
        <dbReference type="ChEBI" id="CHEBI:78536"/>
        <dbReference type="ChEBI" id="CHEBI:456215"/>
        <dbReference type="EC" id="6.1.1.1"/>
    </reaction>
</comment>
<comment type="subunit">
    <text evidence="1">Homodimer.</text>
</comment>
<comment type="subcellular location">
    <subcellularLocation>
        <location evidence="1">Cytoplasm</location>
    </subcellularLocation>
</comment>
<comment type="similarity">
    <text evidence="1">Belongs to the class-I aminoacyl-tRNA synthetase family. TyrS type 1 subfamily.</text>
</comment>
<evidence type="ECO:0000255" key="1">
    <source>
        <dbReference type="HAMAP-Rule" id="MF_02006"/>
    </source>
</evidence>
<dbReference type="EC" id="6.1.1.1" evidence="1"/>
<dbReference type="EMBL" id="AM884177">
    <property type="protein sequence ID" value="CAP06711.1"/>
    <property type="molecule type" value="Genomic_DNA"/>
</dbReference>
<dbReference type="RefSeq" id="WP_009873530.1">
    <property type="nucleotide sequence ID" value="NC_010280.2"/>
</dbReference>
<dbReference type="SMR" id="B0BB49"/>
<dbReference type="KEGG" id="ctl:CTLon_0313"/>
<dbReference type="HOGENOM" id="CLU_024003_0_3_0"/>
<dbReference type="Proteomes" id="UP001154401">
    <property type="component" value="Chromosome"/>
</dbReference>
<dbReference type="GO" id="GO:0005829">
    <property type="term" value="C:cytosol"/>
    <property type="evidence" value="ECO:0007669"/>
    <property type="project" value="TreeGrafter"/>
</dbReference>
<dbReference type="GO" id="GO:0005524">
    <property type="term" value="F:ATP binding"/>
    <property type="evidence" value="ECO:0007669"/>
    <property type="project" value="UniProtKB-UniRule"/>
</dbReference>
<dbReference type="GO" id="GO:0003723">
    <property type="term" value="F:RNA binding"/>
    <property type="evidence" value="ECO:0007669"/>
    <property type="project" value="UniProtKB-KW"/>
</dbReference>
<dbReference type="GO" id="GO:0004831">
    <property type="term" value="F:tyrosine-tRNA ligase activity"/>
    <property type="evidence" value="ECO:0007669"/>
    <property type="project" value="UniProtKB-UniRule"/>
</dbReference>
<dbReference type="GO" id="GO:0006437">
    <property type="term" value="P:tyrosyl-tRNA aminoacylation"/>
    <property type="evidence" value="ECO:0007669"/>
    <property type="project" value="UniProtKB-UniRule"/>
</dbReference>
<dbReference type="CDD" id="cd00165">
    <property type="entry name" value="S4"/>
    <property type="match status" value="1"/>
</dbReference>
<dbReference type="CDD" id="cd00805">
    <property type="entry name" value="TyrRS_core"/>
    <property type="match status" value="1"/>
</dbReference>
<dbReference type="FunFam" id="3.40.50.620:FF:000287">
    <property type="entry name" value="Tyrosine--tRNA ligase"/>
    <property type="match status" value="1"/>
</dbReference>
<dbReference type="Gene3D" id="3.40.50.620">
    <property type="entry name" value="HUPs"/>
    <property type="match status" value="1"/>
</dbReference>
<dbReference type="Gene3D" id="3.10.290.10">
    <property type="entry name" value="RNA-binding S4 domain"/>
    <property type="match status" value="1"/>
</dbReference>
<dbReference type="Gene3D" id="1.10.240.10">
    <property type="entry name" value="Tyrosyl-Transfer RNA Synthetase"/>
    <property type="match status" value="1"/>
</dbReference>
<dbReference type="HAMAP" id="MF_02006">
    <property type="entry name" value="Tyr_tRNA_synth_type1"/>
    <property type="match status" value="1"/>
</dbReference>
<dbReference type="InterPro" id="IPR002305">
    <property type="entry name" value="aa-tRNA-synth_Ic"/>
</dbReference>
<dbReference type="InterPro" id="IPR014729">
    <property type="entry name" value="Rossmann-like_a/b/a_fold"/>
</dbReference>
<dbReference type="InterPro" id="IPR002942">
    <property type="entry name" value="S4_RNA-bd"/>
</dbReference>
<dbReference type="InterPro" id="IPR036986">
    <property type="entry name" value="S4_RNA-bd_sf"/>
</dbReference>
<dbReference type="InterPro" id="IPR002307">
    <property type="entry name" value="Tyr-tRNA-ligase"/>
</dbReference>
<dbReference type="InterPro" id="IPR024088">
    <property type="entry name" value="Tyr-tRNA-ligase_bac-type"/>
</dbReference>
<dbReference type="InterPro" id="IPR024107">
    <property type="entry name" value="Tyr-tRNA-ligase_bac_1"/>
</dbReference>
<dbReference type="NCBIfam" id="TIGR00234">
    <property type="entry name" value="tyrS"/>
    <property type="match status" value="1"/>
</dbReference>
<dbReference type="PANTHER" id="PTHR11766:SF0">
    <property type="entry name" value="TYROSINE--TRNA LIGASE, MITOCHONDRIAL"/>
    <property type="match status" value="1"/>
</dbReference>
<dbReference type="PANTHER" id="PTHR11766">
    <property type="entry name" value="TYROSYL-TRNA SYNTHETASE"/>
    <property type="match status" value="1"/>
</dbReference>
<dbReference type="Pfam" id="PF01479">
    <property type="entry name" value="S4"/>
    <property type="match status" value="1"/>
</dbReference>
<dbReference type="Pfam" id="PF00579">
    <property type="entry name" value="tRNA-synt_1b"/>
    <property type="match status" value="1"/>
</dbReference>
<dbReference type="PRINTS" id="PR01040">
    <property type="entry name" value="TRNASYNTHTYR"/>
</dbReference>
<dbReference type="SMART" id="SM00363">
    <property type="entry name" value="S4"/>
    <property type="match status" value="1"/>
</dbReference>
<dbReference type="SUPFAM" id="SSF55174">
    <property type="entry name" value="Alpha-L RNA-binding motif"/>
    <property type="match status" value="1"/>
</dbReference>
<dbReference type="SUPFAM" id="SSF52374">
    <property type="entry name" value="Nucleotidylyl transferase"/>
    <property type="match status" value="1"/>
</dbReference>
<dbReference type="PROSITE" id="PS50889">
    <property type="entry name" value="S4"/>
    <property type="match status" value="1"/>
</dbReference>